<gene>
    <name evidence="1" type="primary">serS</name>
    <name type="ordered locus">EFER_1042</name>
</gene>
<name>SYS_ESCF3</name>
<protein>
    <recommendedName>
        <fullName evidence="1">Serine--tRNA ligase</fullName>
        <ecNumber evidence="1">6.1.1.11</ecNumber>
    </recommendedName>
    <alternativeName>
        <fullName evidence="1">Seryl-tRNA synthetase</fullName>
        <shortName evidence="1">SerRS</shortName>
    </alternativeName>
    <alternativeName>
        <fullName evidence="1">Seryl-tRNA(Ser/Sec) synthetase</fullName>
    </alternativeName>
</protein>
<proteinExistence type="inferred from homology"/>
<reference key="1">
    <citation type="journal article" date="2009" name="PLoS Genet.">
        <title>Organised genome dynamics in the Escherichia coli species results in highly diverse adaptive paths.</title>
        <authorList>
            <person name="Touchon M."/>
            <person name="Hoede C."/>
            <person name="Tenaillon O."/>
            <person name="Barbe V."/>
            <person name="Baeriswyl S."/>
            <person name="Bidet P."/>
            <person name="Bingen E."/>
            <person name="Bonacorsi S."/>
            <person name="Bouchier C."/>
            <person name="Bouvet O."/>
            <person name="Calteau A."/>
            <person name="Chiapello H."/>
            <person name="Clermont O."/>
            <person name="Cruveiller S."/>
            <person name="Danchin A."/>
            <person name="Diard M."/>
            <person name="Dossat C."/>
            <person name="Karoui M.E."/>
            <person name="Frapy E."/>
            <person name="Garry L."/>
            <person name="Ghigo J.M."/>
            <person name="Gilles A.M."/>
            <person name="Johnson J."/>
            <person name="Le Bouguenec C."/>
            <person name="Lescat M."/>
            <person name="Mangenot S."/>
            <person name="Martinez-Jehanne V."/>
            <person name="Matic I."/>
            <person name="Nassif X."/>
            <person name="Oztas S."/>
            <person name="Petit M.A."/>
            <person name="Pichon C."/>
            <person name="Rouy Z."/>
            <person name="Ruf C.S."/>
            <person name="Schneider D."/>
            <person name="Tourret J."/>
            <person name="Vacherie B."/>
            <person name="Vallenet D."/>
            <person name="Medigue C."/>
            <person name="Rocha E.P.C."/>
            <person name="Denamur E."/>
        </authorList>
    </citation>
    <scope>NUCLEOTIDE SEQUENCE [LARGE SCALE GENOMIC DNA]</scope>
    <source>
        <strain>ATCC 35469 / DSM 13698 / BCRC 15582 / CCUG 18766 / IAM 14443 / JCM 21226 / LMG 7866 / NBRC 102419 / NCTC 12128 / CDC 0568-73</strain>
    </source>
</reference>
<comment type="function">
    <text evidence="1">Catalyzes the attachment of serine to tRNA(Ser). Is also able to aminoacylate tRNA(Sec) with serine, to form the misacylated tRNA L-seryl-tRNA(Sec), which will be further converted into selenocysteinyl-tRNA(Sec).</text>
</comment>
<comment type="catalytic activity">
    <reaction evidence="1">
        <text>tRNA(Ser) + L-serine + ATP = L-seryl-tRNA(Ser) + AMP + diphosphate + H(+)</text>
        <dbReference type="Rhea" id="RHEA:12292"/>
        <dbReference type="Rhea" id="RHEA-COMP:9669"/>
        <dbReference type="Rhea" id="RHEA-COMP:9703"/>
        <dbReference type="ChEBI" id="CHEBI:15378"/>
        <dbReference type="ChEBI" id="CHEBI:30616"/>
        <dbReference type="ChEBI" id="CHEBI:33019"/>
        <dbReference type="ChEBI" id="CHEBI:33384"/>
        <dbReference type="ChEBI" id="CHEBI:78442"/>
        <dbReference type="ChEBI" id="CHEBI:78533"/>
        <dbReference type="ChEBI" id="CHEBI:456215"/>
        <dbReference type="EC" id="6.1.1.11"/>
    </reaction>
</comment>
<comment type="catalytic activity">
    <reaction evidence="1">
        <text>tRNA(Sec) + L-serine + ATP = L-seryl-tRNA(Sec) + AMP + diphosphate + H(+)</text>
        <dbReference type="Rhea" id="RHEA:42580"/>
        <dbReference type="Rhea" id="RHEA-COMP:9742"/>
        <dbReference type="Rhea" id="RHEA-COMP:10128"/>
        <dbReference type="ChEBI" id="CHEBI:15378"/>
        <dbReference type="ChEBI" id="CHEBI:30616"/>
        <dbReference type="ChEBI" id="CHEBI:33019"/>
        <dbReference type="ChEBI" id="CHEBI:33384"/>
        <dbReference type="ChEBI" id="CHEBI:78442"/>
        <dbReference type="ChEBI" id="CHEBI:78533"/>
        <dbReference type="ChEBI" id="CHEBI:456215"/>
        <dbReference type="EC" id="6.1.1.11"/>
    </reaction>
</comment>
<comment type="pathway">
    <text evidence="1">Aminoacyl-tRNA biosynthesis; selenocysteinyl-tRNA(Sec) biosynthesis; L-seryl-tRNA(Sec) from L-serine and tRNA(Sec): step 1/1.</text>
</comment>
<comment type="subunit">
    <text evidence="1">Homodimer. The tRNA molecule binds across the dimer.</text>
</comment>
<comment type="subcellular location">
    <subcellularLocation>
        <location evidence="1">Cytoplasm</location>
    </subcellularLocation>
</comment>
<comment type="domain">
    <text evidence="1">Consists of two distinct domains, a catalytic core and a N-terminal extension that is involved in tRNA binding.</text>
</comment>
<comment type="similarity">
    <text evidence="1">Belongs to the class-II aminoacyl-tRNA synthetase family. Type-1 seryl-tRNA synthetase subfamily.</text>
</comment>
<keyword id="KW-0030">Aminoacyl-tRNA synthetase</keyword>
<keyword id="KW-0067">ATP-binding</keyword>
<keyword id="KW-0963">Cytoplasm</keyword>
<keyword id="KW-0436">Ligase</keyword>
<keyword id="KW-0547">Nucleotide-binding</keyword>
<keyword id="KW-0648">Protein biosynthesis</keyword>
<organism>
    <name type="scientific">Escherichia fergusonii (strain ATCC 35469 / DSM 13698 / CCUG 18766 / IAM 14443 / JCM 21226 / LMG 7866 / NBRC 102419 / NCTC 12128 / CDC 0568-73)</name>
    <dbReference type="NCBI Taxonomy" id="585054"/>
    <lineage>
        <taxon>Bacteria</taxon>
        <taxon>Pseudomonadati</taxon>
        <taxon>Pseudomonadota</taxon>
        <taxon>Gammaproteobacteria</taxon>
        <taxon>Enterobacterales</taxon>
        <taxon>Enterobacteriaceae</taxon>
        <taxon>Escherichia</taxon>
    </lineage>
</organism>
<feature type="chain" id="PRO_1000199484" description="Serine--tRNA ligase">
    <location>
        <begin position="1"/>
        <end position="430"/>
    </location>
</feature>
<feature type="binding site" evidence="1">
    <location>
        <begin position="237"/>
        <end position="239"/>
    </location>
    <ligand>
        <name>L-serine</name>
        <dbReference type="ChEBI" id="CHEBI:33384"/>
    </ligand>
</feature>
<feature type="binding site" evidence="1">
    <location>
        <begin position="268"/>
        <end position="270"/>
    </location>
    <ligand>
        <name>ATP</name>
        <dbReference type="ChEBI" id="CHEBI:30616"/>
    </ligand>
</feature>
<feature type="binding site" evidence="1">
    <location>
        <position position="291"/>
    </location>
    <ligand>
        <name>L-serine</name>
        <dbReference type="ChEBI" id="CHEBI:33384"/>
    </ligand>
</feature>
<feature type="binding site" evidence="1">
    <location>
        <begin position="355"/>
        <end position="358"/>
    </location>
    <ligand>
        <name>ATP</name>
        <dbReference type="ChEBI" id="CHEBI:30616"/>
    </ligand>
</feature>
<feature type="binding site" evidence="1">
    <location>
        <position position="391"/>
    </location>
    <ligand>
        <name>L-serine</name>
        <dbReference type="ChEBI" id="CHEBI:33384"/>
    </ligand>
</feature>
<sequence>MLDPNLLRNEPDAVAEKLARRGFKLDVDKLGALEERRKVLQVKTENLQAERNSRSKSIGQAKARGEDIEPLRLEVNKLGEELDAAKAELDALQAEIRDIALTIPNLPADEVPVGKDENDNVEVSRWGTPREFDFEVRDHVTLGEMHSGLDFAAAVKLTGSRFVVMKGQIARMHRALAQFMLDLHTEQHGYSENYVPYLVNQDTLYGTGQLPKFAGDLFHTRPLEEEADTSNYALIPTAEVPLTNLVRGEIIDEDDLPIKMTAHTPCFRSEAGSYGRDTRGLIRMHQFDKVEMVQIVRPEDSMAALEEMTGHAEKVLQLLGLPYRKIILCTGDMGFGACKTYDLEVWIPAQNTYREISSCSNVWDFQARRMQARCRSKSDKKTRLVHTLNGSGLAVGRTLVAVMENYQQADGRIEVPEVLRPYMNGLEYIG</sequence>
<accession>B7LN61</accession>
<evidence type="ECO:0000255" key="1">
    <source>
        <dbReference type="HAMAP-Rule" id="MF_00176"/>
    </source>
</evidence>
<dbReference type="EC" id="6.1.1.11" evidence="1"/>
<dbReference type="EMBL" id="CU928158">
    <property type="protein sequence ID" value="CAQ88572.1"/>
    <property type="molecule type" value="Genomic_DNA"/>
</dbReference>
<dbReference type="RefSeq" id="WP_000886674.1">
    <property type="nucleotide sequence ID" value="NC_011740.1"/>
</dbReference>
<dbReference type="SMR" id="B7LN61"/>
<dbReference type="GeneID" id="75057907"/>
<dbReference type="KEGG" id="efe:EFER_1042"/>
<dbReference type="HOGENOM" id="CLU_023797_1_1_6"/>
<dbReference type="OrthoDB" id="9804647at2"/>
<dbReference type="UniPathway" id="UPA00906">
    <property type="reaction ID" value="UER00895"/>
</dbReference>
<dbReference type="Proteomes" id="UP000000745">
    <property type="component" value="Chromosome"/>
</dbReference>
<dbReference type="GO" id="GO:0005737">
    <property type="term" value="C:cytoplasm"/>
    <property type="evidence" value="ECO:0007669"/>
    <property type="project" value="UniProtKB-SubCell"/>
</dbReference>
<dbReference type="GO" id="GO:0005524">
    <property type="term" value="F:ATP binding"/>
    <property type="evidence" value="ECO:0007669"/>
    <property type="project" value="UniProtKB-UniRule"/>
</dbReference>
<dbReference type="GO" id="GO:0004828">
    <property type="term" value="F:serine-tRNA ligase activity"/>
    <property type="evidence" value="ECO:0007669"/>
    <property type="project" value="UniProtKB-UniRule"/>
</dbReference>
<dbReference type="GO" id="GO:0016260">
    <property type="term" value="P:selenocysteine biosynthetic process"/>
    <property type="evidence" value="ECO:0007669"/>
    <property type="project" value="UniProtKB-UniRule"/>
</dbReference>
<dbReference type="GO" id="GO:0006434">
    <property type="term" value="P:seryl-tRNA aminoacylation"/>
    <property type="evidence" value="ECO:0007669"/>
    <property type="project" value="UniProtKB-UniRule"/>
</dbReference>
<dbReference type="CDD" id="cd00770">
    <property type="entry name" value="SerRS_core"/>
    <property type="match status" value="1"/>
</dbReference>
<dbReference type="FunFam" id="1.10.287.40:FF:000001">
    <property type="entry name" value="Serine--tRNA ligase"/>
    <property type="match status" value="1"/>
</dbReference>
<dbReference type="FunFam" id="3.30.930.10:FF:000018">
    <property type="entry name" value="Serine--tRNA ligase"/>
    <property type="match status" value="1"/>
</dbReference>
<dbReference type="Gene3D" id="3.30.930.10">
    <property type="entry name" value="Bira Bifunctional Protein, Domain 2"/>
    <property type="match status" value="1"/>
</dbReference>
<dbReference type="Gene3D" id="1.10.287.40">
    <property type="entry name" value="Serine-tRNA synthetase, tRNA binding domain"/>
    <property type="match status" value="1"/>
</dbReference>
<dbReference type="HAMAP" id="MF_00176">
    <property type="entry name" value="Ser_tRNA_synth_type1"/>
    <property type="match status" value="1"/>
</dbReference>
<dbReference type="InterPro" id="IPR002314">
    <property type="entry name" value="aa-tRNA-synt_IIb"/>
</dbReference>
<dbReference type="InterPro" id="IPR006195">
    <property type="entry name" value="aa-tRNA-synth_II"/>
</dbReference>
<dbReference type="InterPro" id="IPR045864">
    <property type="entry name" value="aa-tRNA-synth_II/BPL/LPL"/>
</dbReference>
<dbReference type="InterPro" id="IPR002317">
    <property type="entry name" value="Ser-tRNA-ligase_type_1"/>
</dbReference>
<dbReference type="InterPro" id="IPR015866">
    <property type="entry name" value="Ser-tRNA-synth_1_N"/>
</dbReference>
<dbReference type="InterPro" id="IPR042103">
    <property type="entry name" value="SerRS_1_N_sf"/>
</dbReference>
<dbReference type="InterPro" id="IPR033729">
    <property type="entry name" value="SerRS_core"/>
</dbReference>
<dbReference type="InterPro" id="IPR010978">
    <property type="entry name" value="tRNA-bd_arm"/>
</dbReference>
<dbReference type="NCBIfam" id="TIGR00414">
    <property type="entry name" value="serS"/>
    <property type="match status" value="1"/>
</dbReference>
<dbReference type="PANTHER" id="PTHR43697:SF1">
    <property type="entry name" value="SERINE--TRNA LIGASE"/>
    <property type="match status" value="1"/>
</dbReference>
<dbReference type="PANTHER" id="PTHR43697">
    <property type="entry name" value="SERYL-TRNA SYNTHETASE"/>
    <property type="match status" value="1"/>
</dbReference>
<dbReference type="Pfam" id="PF02403">
    <property type="entry name" value="Seryl_tRNA_N"/>
    <property type="match status" value="1"/>
</dbReference>
<dbReference type="Pfam" id="PF00587">
    <property type="entry name" value="tRNA-synt_2b"/>
    <property type="match status" value="1"/>
</dbReference>
<dbReference type="PIRSF" id="PIRSF001529">
    <property type="entry name" value="Ser-tRNA-synth_IIa"/>
    <property type="match status" value="1"/>
</dbReference>
<dbReference type="PRINTS" id="PR00981">
    <property type="entry name" value="TRNASYNTHSER"/>
</dbReference>
<dbReference type="SUPFAM" id="SSF55681">
    <property type="entry name" value="Class II aaRS and biotin synthetases"/>
    <property type="match status" value="1"/>
</dbReference>
<dbReference type="SUPFAM" id="SSF46589">
    <property type="entry name" value="tRNA-binding arm"/>
    <property type="match status" value="1"/>
</dbReference>
<dbReference type="PROSITE" id="PS50862">
    <property type="entry name" value="AA_TRNA_LIGASE_II"/>
    <property type="match status" value="1"/>
</dbReference>